<gene>
    <name type="primary">Fezf2</name>
    <name type="synonym">Fez</name>
    <name type="synonym">Fezl</name>
    <name type="synonym">Zfp312</name>
</gene>
<reference key="1">
    <citation type="journal article" date="2000" name="Mech. Dev.">
        <title>Expression of the zinc finger gene fez-like in zebrafish forebrain.</title>
        <authorList>
            <person name="Hashimoto H."/>
            <person name="Yabe T."/>
            <person name="Hirata T."/>
            <person name="Shimizu T."/>
            <person name="Bae Y.-K."/>
            <person name="Yamanaka Y."/>
            <person name="Hirano T."/>
            <person name="Hibi M."/>
        </authorList>
    </citation>
    <scope>NUCLEOTIDE SEQUENCE [MRNA]</scope>
</reference>
<reference key="2">
    <citation type="journal article" date="2005" name="Science">
        <title>The transcriptional landscape of the mammalian genome.</title>
        <authorList>
            <person name="Carninci P."/>
            <person name="Kasukawa T."/>
            <person name="Katayama S."/>
            <person name="Gough J."/>
            <person name="Frith M.C."/>
            <person name="Maeda N."/>
            <person name="Oyama R."/>
            <person name="Ravasi T."/>
            <person name="Lenhard B."/>
            <person name="Wells C."/>
            <person name="Kodzius R."/>
            <person name="Shimokawa K."/>
            <person name="Bajic V.B."/>
            <person name="Brenner S.E."/>
            <person name="Batalov S."/>
            <person name="Forrest A.R."/>
            <person name="Zavolan M."/>
            <person name="Davis M.J."/>
            <person name="Wilming L.G."/>
            <person name="Aidinis V."/>
            <person name="Allen J.E."/>
            <person name="Ambesi-Impiombato A."/>
            <person name="Apweiler R."/>
            <person name="Aturaliya R.N."/>
            <person name="Bailey T.L."/>
            <person name="Bansal M."/>
            <person name="Baxter L."/>
            <person name="Beisel K.W."/>
            <person name="Bersano T."/>
            <person name="Bono H."/>
            <person name="Chalk A.M."/>
            <person name="Chiu K.P."/>
            <person name="Choudhary V."/>
            <person name="Christoffels A."/>
            <person name="Clutterbuck D.R."/>
            <person name="Crowe M.L."/>
            <person name="Dalla E."/>
            <person name="Dalrymple B.P."/>
            <person name="de Bono B."/>
            <person name="Della Gatta G."/>
            <person name="di Bernardo D."/>
            <person name="Down T."/>
            <person name="Engstrom P."/>
            <person name="Fagiolini M."/>
            <person name="Faulkner G."/>
            <person name="Fletcher C.F."/>
            <person name="Fukushima T."/>
            <person name="Furuno M."/>
            <person name="Futaki S."/>
            <person name="Gariboldi M."/>
            <person name="Georgii-Hemming P."/>
            <person name="Gingeras T.R."/>
            <person name="Gojobori T."/>
            <person name="Green R.E."/>
            <person name="Gustincich S."/>
            <person name="Harbers M."/>
            <person name="Hayashi Y."/>
            <person name="Hensch T.K."/>
            <person name="Hirokawa N."/>
            <person name="Hill D."/>
            <person name="Huminiecki L."/>
            <person name="Iacono M."/>
            <person name="Ikeo K."/>
            <person name="Iwama A."/>
            <person name="Ishikawa T."/>
            <person name="Jakt M."/>
            <person name="Kanapin A."/>
            <person name="Katoh M."/>
            <person name="Kawasawa Y."/>
            <person name="Kelso J."/>
            <person name="Kitamura H."/>
            <person name="Kitano H."/>
            <person name="Kollias G."/>
            <person name="Krishnan S.P."/>
            <person name="Kruger A."/>
            <person name="Kummerfeld S.K."/>
            <person name="Kurochkin I.V."/>
            <person name="Lareau L.F."/>
            <person name="Lazarevic D."/>
            <person name="Lipovich L."/>
            <person name="Liu J."/>
            <person name="Liuni S."/>
            <person name="McWilliam S."/>
            <person name="Madan Babu M."/>
            <person name="Madera M."/>
            <person name="Marchionni L."/>
            <person name="Matsuda H."/>
            <person name="Matsuzawa S."/>
            <person name="Miki H."/>
            <person name="Mignone F."/>
            <person name="Miyake S."/>
            <person name="Morris K."/>
            <person name="Mottagui-Tabar S."/>
            <person name="Mulder N."/>
            <person name="Nakano N."/>
            <person name="Nakauchi H."/>
            <person name="Ng P."/>
            <person name="Nilsson R."/>
            <person name="Nishiguchi S."/>
            <person name="Nishikawa S."/>
            <person name="Nori F."/>
            <person name="Ohara O."/>
            <person name="Okazaki Y."/>
            <person name="Orlando V."/>
            <person name="Pang K.C."/>
            <person name="Pavan W.J."/>
            <person name="Pavesi G."/>
            <person name="Pesole G."/>
            <person name="Petrovsky N."/>
            <person name="Piazza S."/>
            <person name="Reed J."/>
            <person name="Reid J.F."/>
            <person name="Ring B.Z."/>
            <person name="Ringwald M."/>
            <person name="Rost B."/>
            <person name="Ruan Y."/>
            <person name="Salzberg S.L."/>
            <person name="Sandelin A."/>
            <person name="Schneider C."/>
            <person name="Schoenbach C."/>
            <person name="Sekiguchi K."/>
            <person name="Semple C.A."/>
            <person name="Seno S."/>
            <person name="Sessa L."/>
            <person name="Sheng Y."/>
            <person name="Shibata Y."/>
            <person name="Shimada H."/>
            <person name="Shimada K."/>
            <person name="Silva D."/>
            <person name="Sinclair B."/>
            <person name="Sperling S."/>
            <person name="Stupka E."/>
            <person name="Sugiura K."/>
            <person name="Sultana R."/>
            <person name="Takenaka Y."/>
            <person name="Taki K."/>
            <person name="Tammoja K."/>
            <person name="Tan S.L."/>
            <person name="Tang S."/>
            <person name="Taylor M.S."/>
            <person name="Tegner J."/>
            <person name="Teichmann S.A."/>
            <person name="Ueda H.R."/>
            <person name="van Nimwegen E."/>
            <person name="Verardo R."/>
            <person name="Wei C.L."/>
            <person name="Yagi K."/>
            <person name="Yamanishi H."/>
            <person name="Zabarovsky E."/>
            <person name="Zhu S."/>
            <person name="Zimmer A."/>
            <person name="Hide W."/>
            <person name="Bult C."/>
            <person name="Grimmond S.M."/>
            <person name="Teasdale R.D."/>
            <person name="Liu E.T."/>
            <person name="Brusic V."/>
            <person name="Quackenbush J."/>
            <person name="Wahlestedt C."/>
            <person name="Mattick J.S."/>
            <person name="Hume D.A."/>
            <person name="Kai C."/>
            <person name="Sasaki D."/>
            <person name="Tomaru Y."/>
            <person name="Fukuda S."/>
            <person name="Kanamori-Katayama M."/>
            <person name="Suzuki M."/>
            <person name="Aoki J."/>
            <person name="Arakawa T."/>
            <person name="Iida J."/>
            <person name="Imamura K."/>
            <person name="Itoh M."/>
            <person name="Kato T."/>
            <person name="Kawaji H."/>
            <person name="Kawagashira N."/>
            <person name="Kawashima T."/>
            <person name="Kojima M."/>
            <person name="Kondo S."/>
            <person name="Konno H."/>
            <person name="Nakano K."/>
            <person name="Ninomiya N."/>
            <person name="Nishio T."/>
            <person name="Okada M."/>
            <person name="Plessy C."/>
            <person name="Shibata K."/>
            <person name="Shiraki T."/>
            <person name="Suzuki S."/>
            <person name="Tagami M."/>
            <person name="Waki K."/>
            <person name="Watahiki A."/>
            <person name="Okamura-Oho Y."/>
            <person name="Suzuki H."/>
            <person name="Kawai J."/>
            <person name="Hayashizaki Y."/>
        </authorList>
    </citation>
    <scope>NUCLEOTIDE SEQUENCE [LARGE SCALE MRNA]</scope>
    <source>
        <strain>C57BL/6J</strain>
        <tissue>Thymus</tissue>
    </source>
</reference>
<reference key="3">
    <citation type="journal article" date="2004" name="Genome Res.">
        <title>The status, quality, and expansion of the NIH full-length cDNA project: the Mammalian Gene Collection (MGC).</title>
        <authorList>
            <consortium name="The MGC Project Team"/>
        </authorList>
    </citation>
    <scope>NUCLEOTIDE SEQUENCE [LARGE SCALE MRNA]</scope>
    <source>
        <strain>C57BL/6J</strain>
        <tissue>Brain</tissue>
    </source>
</reference>
<reference key="4">
    <citation type="journal article" date="2005" name="Proc. Natl. Acad. Sci. U.S.A.">
        <title>Zfp312 is required for subcortical axonal projections and dendritic morphology of deep-layer pyramidal neurons of the cerebral cortex.</title>
        <authorList>
            <person name="Chen J.-G."/>
            <person name="Rasin M.-R."/>
            <person name="Kwan K.Y."/>
            <person name="Sestan N."/>
        </authorList>
    </citation>
    <scope>FUNCTION</scope>
    <scope>SUBCELLULAR LOCATION</scope>
    <scope>TISSUE SPECIFICITY</scope>
    <scope>DEVELOPMENTAL STAGE</scope>
</reference>
<reference key="5">
    <citation type="journal article" date="2005" name="Neuron">
        <title>Fezl is required for the birth and specification of corticospinal motor neurons.</title>
        <authorList>
            <person name="Molyneaux B.J."/>
            <person name="Arlotta P."/>
            <person name="Hirata T."/>
            <person name="Hibi M."/>
            <person name="Macklis J.D."/>
        </authorList>
    </citation>
    <scope>FUNCTION</scope>
    <scope>TISSUE SPECIFICITY</scope>
    <scope>DEVELOPMENTAL STAGE</scope>
</reference>
<reference key="6">
    <citation type="journal article" date="2006" name="Development">
        <title>Zinc-finger gene Fez in the olfactory sensory neurons regulates development of the olfactory bulb non-cell-autonomously.</title>
        <authorList>
            <person name="Hirata T."/>
            <person name="Nakazawa M."/>
            <person name="Yoshihara S."/>
            <person name="Miyachi H."/>
            <person name="Kitamura K."/>
            <person name="Yoshihara Y."/>
            <person name="Hibi M."/>
        </authorList>
    </citation>
    <scope>FUNCTION</scope>
    <scope>DEVELOPMENTAL STAGE</scope>
    <scope>DISRUPTION PHENOTYPE</scope>
</reference>
<reference key="7">
    <citation type="journal article" date="2006" name="Development">
        <title>Zinc-finger genes Fez and Fez-like function in the establishment of diencephalon subdivisions.</title>
        <authorList>
            <person name="Hirata T."/>
            <person name="Nakazawa M."/>
            <person name="Muraoka O."/>
            <person name="Nakayama R."/>
            <person name="Suda Y."/>
            <person name="Hibi M."/>
        </authorList>
    </citation>
    <scope>FUNCTION</scope>
    <scope>DISRUPTION PHENOTYPE</scope>
</reference>
<reference key="8">
    <citation type="journal article" date="2010" name="Cell">
        <title>A tissue-specific atlas of mouse protein phosphorylation and expression.</title>
        <authorList>
            <person name="Huttlin E.L."/>
            <person name="Jedrychowski M.P."/>
            <person name="Elias J.E."/>
            <person name="Goswami T."/>
            <person name="Rad R."/>
            <person name="Beausoleil S.A."/>
            <person name="Villen J."/>
            <person name="Haas W."/>
            <person name="Sowa M.E."/>
            <person name="Gygi S.P."/>
        </authorList>
    </citation>
    <scope>IDENTIFICATION BY MASS SPECTROMETRY [LARGE SCALE ANALYSIS]</scope>
    <source>
        <tissue>Pancreas</tissue>
    </source>
</reference>
<sequence>MASSASLETMVPPACPRAGASPATSKTLAFSIERIMAKTSEPRAPFEPRPAALEADSSQSKKLLNLCSPLPCMIPLQPLGYEVPSKTLLSYSEFWKSSLRAGGGGGGGSGGGAPVCGASGLCKTNCGVCCKAELGLAPSALPAGRVIKPQVINQAVGLPASGSLYYFNYLDSTAYPPSELLGGHLFPSGLLNAQAPTSLAAHPKLFLLENAKLASLAADKFPHPASYPHKERLHAPLEQVLKENSALTAERGGVKSHSKLPGGSTDSKPKNFTCEVCGKVFNAHYNLTRHMPVHTGARPFVCKVCGKGFRQASTLCRHKIIHTQEKPHKCNQCGKAFNRSSTLNTHIRIHAGYKPFVCEFCGKGFHQKGNYKNHKLTHSGEKQYKCTICNKAFHQVYNLTFHMHTHNDKKPFTCATCGKGFCRNFDLKKHVRKLHDSVGPTATPSAKDLARTVQS</sequence>
<evidence type="ECO:0000255" key="1">
    <source>
        <dbReference type="PROSITE-ProRule" id="PRU00042"/>
    </source>
</evidence>
<evidence type="ECO:0000256" key="2">
    <source>
        <dbReference type="SAM" id="MobiDB-lite"/>
    </source>
</evidence>
<evidence type="ECO:0000269" key="3">
    <source>
    </source>
</evidence>
<evidence type="ECO:0000269" key="4">
    <source>
    </source>
</evidence>
<evidence type="ECO:0000269" key="5">
    <source>
    </source>
</evidence>
<evidence type="ECO:0000269" key="6">
    <source>
    </source>
</evidence>
<evidence type="ECO:0000305" key="7"/>
<name>FEZF2_MOUSE</name>
<organism>
    <name type="scientific">Mus musculus</name>
    <name type="common">Mouse</name>
    <dbReference type="NCBI Taxonomy" id="10090"/>
    <lineage>
        <taxon>Eukaryota</taxon>
        <taxon>Metazoa</taxon>
        <taxon>Chordata</taxon>
        <taxon>Craniata</taxon>
        <taxon>Vertebrata</taxon>
        <taxon>Euteleostomi</taxon>
        <taxon>Mammalia</taxon>
        <taxon>Eutheria</taxon>
        <taxon>Euarchontoglires</taxon>
        <taxon>Glires</taxon>
        <taxon>Rodentia</taxon>
        <taxon>Myomorpha</taxon>
        <taxon>Muroidea</taxon>
        <taxon>Muridae</taxon>
        <taxon>Murinae</taxon>
        <taxon>Mus</taxon>
        <taxon>Mus</taxon>
    </lineage>
</organism>
<protein>
    <recommendedName>
        <fullName>Fez family zinc finger protein 2</fullName>
    </recommendedName>
    <alternativeName>
        <fullName>Forebrain embryonic zinc finger-like protein 2</fullName>
    </alternativeName>
    <alternativeName>
        <fullName>Zinc finger protein 312</fullName>
    </alternativeName>
    <alternativeName>
        <fullName>Zinc finger protein Fez-like</fullName>
    </alternativeName>
</protein>
<proteinExistence type="evidence at protein level"/>
<dbReference type="EMBL" id="AB042399">
    <property type="protein sequence ID" value="BAB17670.1"/>
    <property type="molecule type" value="mRNA"/>
</dbReference>
<dbReference type="EMBL" id="AK019996">
    <property type="protein sequence ID" value="BAB31958.1"/>
    <property type="molecule type" value="mRNA"/>
</dbReference>
<dbReference type="EMBL" id="BC055718">
    <property type="protein sequence ID" value="AAH55718.1"/>
    <property type="molecule type" value="mRNA"/>
</dbReference>
<dbReference type="CCDS" id="CCDS26818.1"/>
<dbReference type="RefSeq" id="NP_536681.2">
    <property type="nucleotide sequence ID" value="NM_080433.3"/>
</dbReference>
<dbReference type="RefSeq" id="XP_030103750.1">
    <property type="nucleotide sequence ID" value="XM_030247890.2"/>
</dbReference>
<dbReference type="RefSeq" id="XP_036014656.1">
    <property type="nucleotide sequence ID" value="XM_036158763.1"/>
</dbReference>
<dbReference type="SMR" id="Q9ESP5"/>
<dbReference type="FunCoup" id="Q9ESP5">
    <property type="interactions" value="1"/>
</dbReference>
<dbReference type="STRING" id="10090.ENSMUSP00000153090"/>
<dbReference type="GlyGen" id="Q9ESP5">
    <property type="glycosylation" value="2 sites"/>
</dbReference>
<dbReference type="PhosphoSitePlus" id="Q9ESP5"/>
<dbReference type="PaxDb" id="10090-ENSMUSP00000022262"/>
<dbReference type="ProteomicsDB" id="271747"/>
<dbReference type="Antibodypedia" id="15277">
    <property type="antibodies" value="138 antibodies from 25 providers"/>
</dbReference>
<dbReference type="DNASU" id="54713"/>
<dbReference type="Ensembl" id="ENSMUST00000022262.6">
    <property type="protein sequence ID" value="ENSMUSP00000022262.5"/>
    <property type="gene ID" value="ENSMUSG00000021743.7"/>
</dbReference>
<dbReference type="Ensembl" id="ENSMUST00000224714.2">
    <property type="protein sequence ID" value="ENSMUSP00000153090.2"/>
    <property type="gene ID" value="ENSMUSG00000021743.7"/>
</dbReference>
<dbReference type="GeneID" id="54713"/>
<dbReference type="KEGG" id="mmu:54713"/>
<dbReference type="UCSC" id="uc007sfs.2">
    <property type="organism name" value="mouse"/>
</dbReference>
<dbReference type="AGR" id="MGI:1859823"/>
<dbReference type="CTD" id="55079"/>
<dbReference type="MGI" id="MGI:1859823">
    <property type="gene designation" value="Fezf2"/>
</dbReference>
<dbReference type="VEuPathDB" id="HostDB:ENSMUSG00000021743"/>
<dbReference type="eggNOG" id="KOG1721">
    <property type="taxonomic scope" value="Eukaryota"/>
</dbReference>
<dbReference type="GeneTree" id="ENSGT00940000160100"/>
<dbReference type="HOGENOM" id="CLU_021813_2_1_1"/>
<dbReference type="InParanoid" id="Q9ESP5"/>
<dbReference type="OMA" id="KHKNFTC"/>
<dbReference type="OrthoDB" id="5062908at2759"/>
<dbReference type="PhylomeDB" id="Q9ESP5"/>
<dbReference type="TreeFam" id="TF316780"/>
<dbReference type="BioGRID-ORCS" id="54713">
    <property type="hits" value="3 hits in 78 CRISPR screens"/>
</dbReference>
<dbReference type="PRO" id="PR:Q9ESP5"/>
<dbReference type="Proteomes" id="UP000000589">
    <property type="component" value="Chromosome 14"/>
</dbReference>
<dbReference type="RNAct" id="Q9ESP5">
    <property type="molecule type" value="protein"/>
</dbReference>
<dbReference type="Bgee" id="ENSMUSG00000021743">
    <property type="expression patterns" value="Expressed in cortical plate and 65 other cell types or tissues"/>
</dbReference>
<dbReference type="ExpressionAtlas" id="Q9ESP5">
    <property type="expression patterns" value="baseline and differential"/>
</dbReference>
<dbReference type="GO" id="GO:0005634">
    <property type="term" value="C:nucleus"/>
    <property type="evidence" value="ECO:0007669"/>
    <property type="project" value="UniProtKB-SubCell"/>
</dbReference>
<dbReference type="GO" id="GO:0003682">
    <property type="term" value="F:chromatin binding"/>
    <property type="evidence" value="ECO:0000314"/>
    <property type="project" value="MGI"/>
</dbReference>
<dbReference type="GO" id="GO:0001228">
    <property type="term" value="F:DNA-binding transcription activator activity, RNA polymerase II-specific"/>
    <property type="evidence" value="ECO:0000314"/>
    <property type="project" value="MGI"/>
</dbReference>
<dbReference type="GO" id="GO:0001227">
    <property type="term" value="F:DNA-binding transcription repressor activity, RNA polymerase II-specific"/>
    <property type="evidence" value="ECO:0000314"/>
    <property type="project" value="MGI"/>
</dbReference>
<dbReference type="GO" id="GO:0000978">
    <property type="term" value="F:RNA polymerase II cis-regulatory region sequence-specific DNA binding"/>
    <property type="evidence" value="ECO:0000314"/>
    <property type="project" value="MGI"/>
</dbReference>
<dbReference type="GO" id="GO:0043565">
    <property type="term" value="F:sequence-specific DNA binding"/>
    <property type="evidence" value="ECO:0000314"/>
    <property type="project" value="UniProtKB"/>
</dbReference>
<dbReference type="GO" id="GO:0000976">
    <property type="term" value="F:transcription cis-regulatory region binding"/>
    <property type="evidence" value="ECO:0000314"/>
    <property type="project" value="UniProtKB"/>
</dbReference>
<dbReference type="GO" id="GO:0008270">
    <property type="term" value="F:zinc ion binding"/>
    <property type="evidence" value="ECO:0007669"/>
    <property type="project" value="UniProtKB-KW"/>
</dbReference>
<dbReference type="GO" id="GO:0007413">
    <property type="term" value="P:axonal fasciculation"/>
    <property type="evidence" value="ECO:0000315"/>
    <property type="project" value="MGI"/>
</dbReference>
<dbReference type="GO" id="GO:0043697">
    <property type="term" value="P:cell dedifferentiation"/>
    <property type="evidence" value="ECO:0000316"/>
    <property type="project" value="UniProtKB"/>
</dbReference>
<dbReference type="GO" id="GO:0021953">
    <property type="term" value="P:central nervous system neuron differentiation"/>
    <property type="evidence" value="ECO:0000316"/>
    <property type="project" value="MGI"/>
</dbReference>
<dbReference type="GO" id="GO:0021853">
    <property type="term" value="P:cerebral cortex GABAergic interneuron migration"/>
    <property type="evidence" value="ECO:0000315"/>
    <property type="project" value="MGI"/>
</dbReference>
<dbReference type="GO" id="GO:0021895">
    <property type="term" value="P:cerebral cortex neuron differentiation"/>
    <property type="evidence" value="ECO:0000315"/>
    <property type="project" value="MGI"/>
</dbReference>
<dbReference type="GO" id="GO:0021902">
    <property type="term" value="P:commitment of neuronal cell to specific neuron type in forebrain"/>
    <property type="evidence" value="ECO:0000315"/>
    <property type="project" value="MGI"/>
</dbReference>
<dbReference type="GO" id="GO:0016358">
    <property type="term" value="P:dendrite development"/>
    <property type="evidence" value="ECO:0000315"/>
    <property type="project" value="MGI"/>
</dbReference>
<dbReference type="GO" id="GO:0021542">
    <property type="term" value="P:dentate gyrus development"/>
    <property type="evidence" value="ECO:0000315"/>
    <property type="project" value="MGI"/>
</dbReference>
<dbReference type="GO" id="GO:0021797">
    <property type="term" value="P:forebrain anterior/posterior pattern specification"/>
    <property type="evidence" value="ECO:0000316"/>
    <property type="project" value="MGI"/>
</dbReference>
<dbReference type="GO" id="GO:0030900">
    <property type="term" value="P:forebrain development"/>
    <property type="evidence" value="ECO:0000315"/>
    <property type="project" value="MGI"/>
</dbReference>
<dbReference type="GO" id="GO:0097154">
    <property type="term" value="P:GABAergic neuron differentiation"/>
    <property type="evidence" value="ECO:0000314"/>
    <property type="project" value="MGI"/>
</dbReference>
<dbReference type="GO" id="GO:0007626">
    <property type="term" value="P:locomotory behavior"/>
    <property type="evidence" value="ECO:0000315"/>
    <property type="project" value="MGI"/>
</dbReference>
<dbReference type="GO" id="GO:0008285">
    <property type="term" value="P:negative regulation of cell population proliferation"/>
    <property type="evidence" value="ECO:0000315"/>
    <property type="project" value="UniProtKB"/>
</dbReference>
<dbReference type="GO" id="GO:0045665">
    <property type="term" value="P:negative regulation of neuron differentiation"/>
    <property type="evidence" value="ECO:0000314"/>
    <property type="project" value="MGI"/>
</dbReference>
<dbReference type="GO" id="GO:0000122">
    <property type="term" value="P:negative regulation of transcription by RNA polymerase II"/>
    <property type="evidence" value="ECO:0000314"/>
    <property type="project" value="MGI"/>
</dbReference>
<dbReference type="GO" id="GO:0030182">
    <property type="term" value="P:neuron differentiation"/>
    <property type="evidence" value="ECO:0000316"/>
    <property type="project" value="MGI"/>
</dbReference>
<dbReference type="GO" id="GO:0048664">
    <property type="term" value="P:neuron fate determination"/>
    <property type="evidence" value="ECO:0000314"/>
    <property type="project" value="MGI"/>
</dbReference>
<dbReference type="GO" id="GO:0045893">
    <property type="term" value="P:positive regulation of DNA-templated transcription"/>
    <property type="evidence" value="ECO:0000315"/>
    <property type="project" value="UniProtKB"/>
</dbReference>
<dbReference type="GO" id="GO:0045666">
    <property type="term" value="P:positive regulation of neuron differentiation"/>
    <property type="evidence" value="ECO:0000316"/>
    <property type="project" value="MGI"/>
</dbReference>
<dbReference type="GO" id="GO:1902667">
    <property type="term" value="P:regulation of axon guidance"/>
    <property type="evidence" value="ECO:0000315"/>
    <property type="project" value="MGI"/>
</dbReference>
<dbReference type="GO" id="GO:0050767">
    <property type="term" value="P:regulation of neurogenesis"/>
    <property type="evidence" value="ECO:0000316"/>
    <property type="project" value="UniProtKB"/>
</dbReference>
<dbReference type="GO" id="GO:0021537">
    <property type="term" value="P:telencephalon development"/>
    <property type="evidence" value="ECO:0000315"/>
    <property type="project" value="UniProtKB"/>
</dbReference>
<dbReference type="FunFam" id="3.30.160.60:FF:000103">
    <property type="entry name" value="FEZ family zinc finger 1"/>
    <property type="match status" value="1"/>
</dbReference>
<dbReference type="FunFam" id="3.30.160.60:FF:000251">
    <property type="entry name" value="FEZ family zinc finger 2"/>
    <property type="match status" value="1"/>
</dbReference>
<dbReference type="FunFam" id="3.30.160.60:FF:000227">
    <property type="entry name" value="fez family zinc finger protein 1"/>
    <property type="match status" value="1"/>
</dbReference>
<dbReference type="FunFam" id="3.30.160.60:FF:000164">
    <property type="entry name" value="Fez family zinc finger protein 2"/>
    <property type="match status" value="1"/>
</dbReference>
<dbReference type="FunFam" id="3.30.160.60:FF:000194">
    <property type="entry name" value="Fez family zinc finger protein 2"/>
    <property type="match status" value="1"/>
</dbReference>
<dbReference type="FunFam" id="3.30.160.60:FF:000863">
    <property type="entry name" value="fez family zinc finger protein 2"/>
    <property type="match status" value="1"/>
</dbReference>
<dbReference type="Gene3D" id="3.30.160.60">
    <property type="entry name" value="Classic Zinc Finger"/>
    <property type="match status" value="6"/>
</dbReference>
<dbReference type="InterPro" id="IPR036236">
    <property type="entry name" value="Znf_C2H2_sf"/>
</dbReference>
<dbReference type="InterPro" id="IPR013087">
    <property type="entry name" value="Znf_C2H2_type"/>
</dbReference>
<dbReference type="PANTHER" id="PTHR24394">
    <property type="entry name" value="ZINC FINGER PROTEIN"/>
    <property type="match status" value="1"/>
</dbReference>
<dbReference type="PANTHER" id="PTHR24394:SF48">
    <property type="entry name" value="ZINC FINGER PROTEIN 771"/>
    <property type="match status" value="1"/>
</dbReference>
<dbReference type="Pfam" id="PF00096">
    <property type="entry name" value="zf-C2H2"/>
    <property type="match status" value="5"/>
</dbReference>
<dbReference type="Pfam" id="PF13912">
    <property type="entry name" value="zf-C2H2_6"/>
    <property type="match status" value="1"/>
</dbReference>
<dbReference type="SMART" id="SM00355">
    <property type="entry name" value="ZnF_C2H2"/>
    <property type="match status" value="6"/>
</dbReference>
<dbReference type="SUPFAM" id="SSF57667">
    <property type="entry name" value="beta-beta-alpha zinc fingers"/>
    <property type="match status" value="3"/>
</dbReference>
<dbReference type="PROSITE" id="PS00028">
    <property type="entry name" value="ZINC_FINGER_C2H2_1"/>
    <property type="match status" value="6"/>
</dbReference>
<dbReference type="PROSITE" id="PS50157">
    <property type="entry name" value="ZINC_FINGER_C2H2_2"/>
    <property type="match status" value="6"/>
</dbReference>
<accession>Q9ESP5</accession>
<accession>Q9D298</accession>
<feature type="chain" id="PRO_0000295121" description="Fez family zinc finger protein 2">
    <location>
        <begin position="1"/>
        <end position="455"/>
    </location>
</feature>
<feature type="zinc finger region" description="C2H2-type 1" evidence="1">
    <location>
        <begin position="272"/>
        <end position="294"/>
    </location>
</feature>
<feature type="zinc finger region" description="C2H2-type 2" evidence="1">
    <location>
        <begin position="300"/>
        <end position="322"/>
    </location>
</feature>
<feature type="zinc finger region" description="C2H2-type 3" evidence="1">
    <location>
        <begin position="328"/>
        <end position="350"/>
    </location>
</feature>
<feature type="zinc finger region" description="C2H2-type 4" evidence="1">
    <location>
        <begin position="356"/>
        <end position="378"/>
    </location>
</feature>
<feature type="zinc finger region" description="C2H2-type 5" evidence="1">
    <location>
        <begin position="384"/>
        <end position="406"/>
    </location>
</feature>
<feature type="zinc finger region" description="C2H2-type 6" evidence="1">
    <location>
        <begin position="412"/>
        <end position="435"/>
    </location>
</feature>
<feature type="region of interest" description="Disordered" evidence="2">
    <location>
        <begin position="1"/>
        <end position="22"/>
    </location>
</feature>
<feature type="short sequence motif" description="Engrailed homology 1 repressor">
    <location>
        <begin position="27"/>
        <end position="42"/>
    </location>
</feature>
<feature type="sequence conflict" description="In Ref. 2; BAB31958." evidence="7" ref="2">
    <original>K</original>
    <variation>R</variation>
    <location>
        <position position="429"/>
    </location>
</feature>
<keyword id="KW-0217">Developmental protein</keyword>
<keyword id="KW-0221">Differentiation</keyword>
<keyword id="KW-0238">DNA-binding</keyword>
<keyword id="KW-0479">Metal-binding</keyword>
<keyword id="KW-0524">Neurogenesis</keyword>
<keyword id="KW-0539">Nucleus</keyword>
<keyword id="KW-1185">Reference proteome</keyword>
<keyword id="KW-0677">Repeat</keyword>
<keyword id="KW-0678">Repressor</keyword>
<keyword id="KW-0804">Transcription</keyword>
<keyword id="KW-0805">Transcription regulation</keyword>
<keyword id="KW-0862">Zinc</keyword>
<keyword id="KW-0863">Zinc-finger</keyword>
<comment type="function">
    <text evidence="3 4 5 6">Transcription repressor. Required for the specification of corticospinal motor neurons and other subcerebral projection neurons. May play a role in layer and neuronal subtype-specific patterning of subcortical projections and axonal fasciculation. Controls the development of dendritic arborization and spines of large layer V pyramidal neurons. Plays a role in rostro-caudal patterning of the diencephalon and in prethalamic formation.</text>
</comment>
<comment type="subcellular location">
    <subcellularLocation>
        <location evidence="4">Nucleus</location>
    </subcellularLocation>
</comment>
<comment type="tissue specificity">
    <text evidence="3 4">Highly expressed in neocortical layer V, moderately expressed in layer VI. Expressed in subcortically projecting neurons.</text>
</comment>
<comment type="developmental stage">
    <text evidence="3 4 5">Expressed in the olfactory epithelium, hypothalamus, ventrolateral pallium and prethalamus at mid-gestation. At 12.5 dpc, highly enriched in the postmigratory pyramidal neurons forming the cortical plate situated beneath the pial surface. At 13.5 dpc, expressed in the ventricular zone and subventricular zone at low levels, expression is much higher in the developing cortical plate, where postmitotic neurons are positioned. During late embryonic and early postnatal development, expression disappears from cortical progenitors and becomes restricted to the subplate and the prospective layer V and VI pyramidal neurons.</text>
</comment>
<comment type="disruption phenotype">
    <text evidence="5 6">In null mutant mice, no subcerebral projection neurons are born and no cortical projections to the brainstem or the spinal cord ever develop. In contrast, other populations of neurons are unaffected. There seems to be a redundant role for FEZF1 and FEZF2 in diencephalon development.</text>
</comment>
<comment type="similarity">
    <text evidence="7">Belongs to the krueppel C2H2-type zinc-finger protein family.</text>
</comment>